<dbReference type="EMBL" id="CP001339">
    <property type="protein sequence ID" value="ACL72628.1"/>
    <property type="molecule type" value="Genomic_DNA"/>
</dbReference>
<dbReference type="RefSeq" id="WP_012638111.1">
    <property type="nucleotide sequence ID" value="NC_011901.1"/>
</dbReference>
<dbReference type="SMR" id="B8GRS4"/>
<dbReference type="STRING" id="396588.Tgr7_1544"/>
<dbReference type="KEGG" id="tgr:Tgr7_1544"/>
<dbReference type="eggNOG" id="COG0776">
    <property type="taxonomic scope" value="Bacteria"/>
</dbReference>
<dbReference type="HOGENOM" id="CLU_105066_2_0_6"/>
<dbReference type="OrthoDB" id="9804203at2"/>
<dbReference type="Proteomes" id="UP000002383">
    <property type="component" value="Chromosome"/>
</dbReference>
<dbReference type="GO" id="GO:0005694">
    <property type="term" value="C:chromosome"/>
    <property type="evidence" value="ECO:0007669"/>
    <property type="project" value="InterPro"/>
</dbReference>
<dbReference type="GO" id="GO:0005829">
    <property type="term" value="C:cytosol"/>
    <property type="evidence" value="ECO:0007669"/>
    <property type="project" value="TreeGrafter"/>
</dbReference>
<dbReference type="GO" id="GO:0003677">
    <property type="term" value="F:DNA binding"/>
    <property type="evidence" value="ECO:0007669"/>
    <property type="project" value="UniProtKB-UniRule"/>
</dbReference>
<dbReference type="GO" id="GO:0030527">
    <property type="term" value="F:structural constituent of chromatin"/>
    <property type="evidence" value="ECO:0007669"/>
    <property type="project" value="InterPro"/>
</dbReference>
<dbReference type="GO" id="GO:0006310">
    <property type="term" value="P:DNA recombination"/>
    <property type="evidence" value="ECO:0007669"/>
    <property type="project" value="UniProtKB-UniRule"/>
</dbReference>
<dbReference type="GO" id="GO:0006355">
    <property type="term" value="P:regulation of DNA-templated transcription"/>
    <property type="evidence" value="ECO:0007669"/>
    <property type="project" value="UniProtKB-UniRule"/>
</dbReference>
<dbReference type="GO" id="GO:0006417">
    <property type="term" value="P:regulation of translation"/>
    <property type="evidence" value="ECO:0007669"/>
    <property type="project" value="UniProtKB-UniRule"/>
</dbReference>
<dbReference type="CDD" id="cd13836">
    <property type="entry name" value="IHF_B"/>
    <property type="match status" value="1"/>
</dbReference>
<dbReference type="FunFam" id="4.10.520.10:FF:000003">
    <property type="entry name" value="Integration host factor subunit beta"/>
    <property type="match status" value="1"/>
</dbReference>
<dbReference type="Gene3D" id="4.10.520.10">
    <property type="entry name" value="IHF-like DNA-binding proteins"/>
    <property type="match status" value="1"/>
</dbReference>
<dbReference type="HAMAP" id="MF_00381">
    <property type="entry name" value="IHF_beta"/>
    <property type="match status" value="1"/>
</dbReference>
<dbReference type="InterPro" id="IPR000119">
    <property type="entry name" value="Hist_DNA-bd"/>
</dbReference>
<dbReference type="InterPro" id="IPR020816">
    <property type="entry name" value="Histone-like_DNA-bd_CS"/>
</dbReference>
<dbReference type="InterPro" id="IPR010992">
    <property type="entry name" value="IHF-like_DNA-bd_dom_sf"/>
</dbReference>
<dbReference type="InterPro" id="IPR005685">
    <property type="entry name" value="IHF_beta"/>
</dbReference>
<dbReference type="NCBIfam" id="TIGR00988">
    <property type="entry name" value="hip"/>
    <property type="match status" value="1"/>
</dbReference>
<dbReference type="NCBIfam" id="NF001222">
    <property type="entry name" value="PRK00199.1"/>
    <property type="match status" value="1"/>
</dbReference>
<dbReference type="PANTHER" id="PTHR33175">
    <property type="entry name" value="DNA-BINDING PROTEIN HU"/>
    <property type="match status" value="1"/>
</dbReference>
<dbReference type="PANTHER" id="PTHR33175:SF5">
    <property type="entry name" value="INTEGRATION HOST FACTOR SUBUNIT BETA"/>
    <property type="match status" value="1"/>
</dbReference>
<dbReference type="Pfam" id="PF00216">
    <property type="entry name" value="Bac_DNA_binding"/>
    <property type="match status" value="1"/>
</dbReference>
<dbReference type="PRINTS" id="PR01727">
    <property type="entry name" value="DNABINDINGHU"/>
</dbReference>
<dbReference type="SMART" id="SM00411">
    <property type="entry name" value="BHL"/>
    <property type="match status" value="1"/>
</dbReference>
<dbReference type="SUPFAM" id="SSF47729">
    <property type="entry name" value="IHF-like DNA-binding proteins"/>
    <property type="match status" value="1"/>
</dbReference>
<dbReference type="PROSITE" id="PS00045">
    <property type="entry name" value="HISTONE_LIKE"/>
    <property type="match status" value="1"/>
</dbReference>
<protein>
    <recommendedName>
        <fullName evidence="1">Integration host factor subunit beta</fullName>
        <shortName evidence="1">IHF-beta</shortName>
    </recommendedName>
</protein>
<organism>
    <name type="scientific">Thioalkalivibrio sulfidiphilus (strain HL-EbGR7)</name>
    <dbReference type="NCBI Taxonomy" id="396588"/>
    <lineage>
        <taxon>Bacteria</taxon>
        <taxon>Pseudomonadati</taxon>
        <taxon>Pseudomonadota</taxon>
        <taxon>Gammaproteobacteria</taxon>
        <taxon>Chromatiales</taxon>
        <taxon>Ectothiorhodospiraceae</taxon>
        <taxon>Thioalkalivibrio</taxon>
    </lineage>
</organism>
<sequence length="96" mass="10892">MTKSELIEILARKQSHLAYKDVELSVKTMLEHLSQALATGDRIEIRGFGSFSLHFRPPRVGRNPKTGETVSLPGKYVPHFKPGKELRERVNAVHEQ</sequence>
<proteinExistence type="inferred from homology"/>
<feature type="chain" id="PRO_1000190449" description="Integration host factor subunit beta">
    <location>
        <begin position="1"/>
        <end position="96"/>
    </location>
</feature>
<feature type="region of interest" description="Disordered" evidence="2">
    <location>
        <begin position="59"/>
        <end position="78"/>
    </location>
</feature>
<reference key="1">
    <citation type="journal article" date="2011" name="Stand. Genomic Sci.">
        <title>Complete genome sequence of 'Thioalkalivibrio sulfidophilus' HL-EbGr7.</title>
        <authorList>
            <person name="Muyzer G."/>
            <person name="Sorokin D.Y."/>
            <person name="Mavromatis K."/>
            <person name="Lapidus A."/>
            <person name="Clum A."/>
            <person name="Ivanova N."/>
            <person name="Pati A."/>
            <person name="d'Haeseleer P."/>
            <person name="Woyke T."/>
            <person name="Kyrpides N.C."/>
        </authorList>
    </citation>
    <scope>NUCLEOTIDE SEQUENCE [LARGE SCALE GENOMIC DNA]</scope>
    <source>
        <strain>HL-EbGR7</strain>
    </source>
</reference>
<comment type="function">
    <text evidence="1">This protein is one of the two subunits of integration host factor, a specific DNA-binding protein that functions in genetic recombination as well as in transcriptional and translational control.</text>
</comment>
<comment type="subunit">
    <text evidence="1">Heterodimer of an alpha and a beta chain.</text>
</comment>
<comment type="similarity">
    <text evidence="1">Belongs to the bacterial histone-like protein family.</text>
</comment>
<name>IHFB_THISH</name>
<keyword id="KW-0233">DNA recombination</keyword>
<keyword id="KW-0238">DNA-binding</keyword>
<keyword id="KW-1185">Reference proteome</keyword>
<keyword id="KW-0804">Transcription</keyword>
<keyword id="KW-0805">Transcription regulation</keyword>
<keyword id="KW-0810">Translation regulation</keyword>
<evidence type="ECO:0000255" key="1">
    <source>
        <dbReference type="HAMAP-Rule" id="MF_00381"/>
    </source>
</evidence>
<evidence type="ECO:0000256" key="2">
    <source>
        <dbReference type="SAM" id="MobiDB-lite"/>
    </source>
</evidence>
<accession>B8GRS4</accession>
<gene>
    <name evidence="1" type="primary">ihfB</name>
    <name evidence="1" type="synonym">himD</name>
    <name type="ordered locus">Tgr7_1544</name>
</gene>